<proteinExistence type="inferred from homology"/>
<organism>
    <name type="scientific">Cupriavidus necator (strain ATCC 17699 / DSM 428 / KCTC 22496 / NCIMB 10442 / H16 / Stanier 337)</name>
    <name type="common">Ralstonia eutropha</name>
    <dbReference type="NCBI Taxonomy" id="381666"/>
    <lineage>
        <taxon>Bacteria</taxon>
        <taxon>Pseudomonadati</taxon>
        <taxon>Pseudomonadota</taxon>
        <taxon>Betaproteobacteria</taxon>
        <taxon>Burkholderiales</taxon>
        <taxon>Burkholderiaceae</taxon>
        <taxon>Cupriavidus</taxon>
    </lineage>
</organism>
<feature type="chain" id="PRO_0000387713" description="Acetaldehyde dehydrogenase 2">
    <location>
        <begin position="1"/>
        <end position="302"/>
    </location>
</feature>
<feature type="active site" description="Acyl-thioester intermediate" evidence="1">
    <location>
        <position position="130"/>
    </location>
</feature>
<feature type="binding site" evidence="1">
    <location>
        <begin position="161"/>
        <end position="169"/>
    </location>
    <ligand>
        <name>NAD(+)</name>
        <dbReference type="ChEBI" id="CHEBI:57540"/>
    </ligand>
</feature>
<feature type="binding site" evidence="1">
    <location>
        <position position="272"/>
    </location>
    <ligand>
        <name>NAD(+)</name>
        <dbReference type="ChEBI" id="CHEBI:57540"/>
    </ligand>
</feature>
<evidence type="ECO:0000255" key="1">
    <source>
        <dbReference type="HAMAP-Rule" id="MF_01657"/>
    </source>
</evidence>
<keyword id="KW-0058">Aromatic hydrocarbons catabolism</keyword>
<keyword id="KW-0520">NAD</keyword>
<keyword id="KW-0560">Oxidoreductase</keyword>
<keyword id="KW-1185">Reference proteome</keyword>
<protein>
    <recommendedName>
        <fullName evidence="1">Acetaldehyde dehydrogenase 2</fullName>
        <ecNumber evidence="1">1.2.1.10</ecNumber>
    </recommendedName>
    <alternativeName>
        <fullName evidence="1">Acetaldehyde dehydrogenase [acetylating] 2</fullName>
    </alternativeName>
</protein>
<gene>
    <name type="ordered locus">H16_B0596</name>
</gene>
<dbReference type="EC" id="1.2.1.10" evidence="1"/>
<dbReference type="EMBL" id="AM260480">
    <property type="protein sequence ID" value="CAJ95393.1"/>
    <property type="molecule type" value="Genomic_DNA"/>
</dbReference>
<dbReference type="RefSeq" id="WP_011616692.1">
    <property type="nucleotide sequence ID" value="NC_008314.1"/>
</dbReference>
<dbReference type="SMR" id="Q0K3N1"/>
<dbReference type="STRING" id="381666.H16_B0596"/>
<dbReference type="KEGG" id="reh:H16_B0596"/>
<dbReference type="eggNOG" id="COG4569">
    <property type="taxonomic scope" value="Bacteria"/>
</dbReference>
<dbReference type="HOGENOM" id="CLU_062208_0_0_4"/>
<dbReference type="OrthoDB" id="9786743at2"/>
<dbReference type="Proteomes" id="UP000008210">
    <property type="component" value="Chromosome 2"/>
</dbReference>
<dbReference type="GO" id="GO:0008774">
    <property type="term" value="F:acetaldehyde dehydrogenase (acetylating) activity"/>
    <property type="evidence" value="ECO:0007669"/>
    <property type="project" value="UniProtKB-UniRule"/>
</dbReference>
<dbReference type="GO" id="GO:0051287">
    <property type="term" value="F:NAD binding"/>
    <property type="evidence" value="ECO:0007669"/>
    <property type="project" value="UniProtKB-UniRule"/>
</dbReference>
<dbReference type="GO" id="GO:0009056">
    <property type="term" value="P:catabolic process"/>
    <property type="evidence" value="ECO:0007669"/>
    <property type="project" value="UniProtKB-KW"/>
</dbReference>
<dbReference type="CDD" id="cd23933">
    <property type="entry name" value="ALDH_C"/>
    <property type="match status" value="1"/>
</dbReference>
<dbReference type="Gene3D" id="3.30.360.10">
    <property type="entry name" value="Dihydrodipicolinate Reductase, domain 2"/>
    <property type="match status" value="1"/>
</dbReference>
<dbReference type="Gene3D" id="3.40.50.720">
    <property type="entry name" value="NAD(P)-binding Rossmann-like Domain"/>
    <property type="match status" value="1"/>
</dbReference>
<dbReference type="HAMAP" id="MF_01657">
    <property type="entry name" value="Ac_ald_DH_ac"/>
    <property type="match status" value="1"/>
</dbReference>
<dbReference type="InterPro" id="IPR003361">
    <property type="entry name" value="Acetaldehyde_dehydrogenase"/>
</dbReference>
<dbReference type="InterPro" id="IPR015426">
    <property type="entry name" value="Acetylaldehyde_DH_C"/>
</dbReference>
<dbReference type="InterPro" id="IPR036291">
    <property type="entry name" value="NAD(P)-bd_dom_sf"/>
</dbReference>
<dbReference type="InterPro" id="IPR000534">
    <property type="entry name" value="Semialdehyde_DH_NAD-bd"/>
</dbReference>
<dbReference type="NCBIfam" id="TIGR03215">
    <property type="entry name" value="ac_ald_DH_ac"/>
    <property type="match status" value="1"/>
</dbReference>
<dbReference type="NCBIfam" id="NF006157">
    <property type="entry name" value="PRK08300.1"/>
    <property type="match status" value="1"/>
</dbReference>
<dbReference type="Pfam" id="PF09290">
    <property type="entry name" value="AcetDehyd-dimer"/>
    <property type="match status" value="1"/>
</dbReference>
<dbReference type="PIRSF" id="PIRSF015689">
    <property type="entry name" value="Actaldh_dh_actl"/>
    <property type="match status" value="1"/>
</dbReference>
<dbReference type="SMART" id="SM00859">
    <property type="entry name" value="Semialdhyde_dh"/>
    <property type="match status" value="1"/>
</dbReference>
<dbReference type="SUPFAM" id="SSF55347">
    <property type="entry name" value="Glyceraldehyde-3-phosphate dehydrogenase-like, C-terminal domain"/>
    <property type="match status" value="1"/>
</dbReference>
<dbReference type="SUPFAM" id="SSF51735">
    <property type="entry name" value="NAD(P)-binding Rossmann-fold domains"/>
    <property type="match status" value="1"/>
</dbReference>
<reference key="1">
    <citation type="journal article" date="2006" name="Nat. Biotechnol.">
        <title>Genome sequence of the bioplastic-producing 'Knallgas' bacterium Ralstonia eutropha H16.</title>
        <authorList>
            <person name="Pohlmann A."/>
            <person name="Fricke W.F."/>
            <person name="Reinecke F."/>
            <person name="Kusian B."/>
            <person name="Liesegang H."/>
            <person name="Cramm R."/>
            <person name="Eitinger T."/>
            <person name="Ewering C."/>
            <person name="Poetter M."/>
            <person name="Schwartz E."/>
            <person name="Strittmatter A."/>
            <person name="Voss I."/>
            <person name="Gottschalk G."/>
            <person name="Steinbuechel A."/>
            <person name="Friedrich B."/>
            <person name="Bowien B."/>
        </authorList>
    </citation>
    <scope>NUCLEOTIDE SEQUENCE [LARGE SCALE GENOMIC DNA]</scope>
    <source>
        <strain>ATCC 17699 / DSM 428 / KCTC 22496 / NCIMB 10442 / H16 / Stanier 337</strain>
    </source>
</reference>
<name>ACDH2_CUPNH</name>
<comment type="catalytic activity">
    <reaction evidence="1">
        <text>acetaldehyde + NAD(+) + CoA = acetyl-CoA + NADH + H(+)</text>
        <dbReference type="Rhea" id="RHEA:23288"/>
        <dbReference type="ChEBI" id="CHEBI:15343"/>
        <dbReference type="ChEBI" id="CHEBI:15378"/>
        <dbReference type="ChEBI" id="CHEBI:57287"/>
        <dbReference type="ChEBI" id="CHEBI:57288"/>
        <dbReference type="ChEBI" id="CHEBI:57540"/>
        <dbReference type="ChEBI" id="CHEBI:57945"/>
        <dbReference type="EC" id="1.2.1.10"/>
    </reaction>
</comment>
<comment type="similarity">
    <text evidence="1">Belongs to the acetaldehyde dehydrogenase family.</text>
</comment>
<accession>Q0K3N1</accession>
<sequence>MNKIRCALIGPGNIGTDLLYKLRRSDILEPVWMVGVEPSSEGLARARELGLKTTSDGIDGLLPHLEADDIRIAFDATSAYVHAEHSARLTARGVRVIDLTPAAIGPFCVPPVNLDAHIGSNEMNVNMVTCGGQATIPMVYAVSRVQPVAYGEIVATVSSRSVGPGTRRNIDEFTRTTAGAIEAVGGARQGKAIIVINPAEPPLIMRDTIHCLTDDAPDVAAITASVHDMIAEVRKYVPGYTLKNGPVFDGKRVSIFLEVEGLGDYLPKYAGNLDIMTASAARTAECIAAAMRAGSAQESANA</sequence>